<sequence>MGKKHKKHKSDKHLYEEYVEKPLKLVLKVGGNEVTELSTGSSGHDSSLFEDKNDHDKHKDRKRKKRKKGEKQIPGEEKGRKRRRVKEDKKKRDRDRVENEAEKDLQCHAPVRLDLPPEKPLTSSLAKQEEVEQTPLQEALNQLMRQLQRKDPSAFFSFPVTDFIAPGYSMIIKHPMDFSTMKEKIKNNDYQSIEELKDNFKLMCTNAMIYNKPETIYYKAAKKLLHSGMKILSQERIQSLKQSIDFMADLQKTRKQKDGTDTSQSGEDGGCWQREREDSGDAEAHAFKSPSKENKKKDKDMLEDKFKSNNLEREQEQLDRIVKESGGKLTRRLVNSQCEFERRKPDGTTTLGLLHPVDPIVGEPGYCPVRLGMTTGRLQSGVNTLQGFKEDKRNKVTPVLYLNYGPYSSYAPHYDSTFANISKDDSDLIYSTYGEDSDLPSDFSIHEFLATCQDYPYVMADSLLDVLTKGGHSRTLQEMEMSLPEDEGHTRTLDTAKEMEITEVEPPGRLDSSTQDRLIALKAVTNFGVPVEVFDSEEAEIFQKKLDETTRLLRELQEAQNERLSTRPPPNMICLLGPSYREMHLAEQVTNNLKELAQQVTPGDIVSTYGVRKAMGISIPSPVMENNFVDLTEDTEEPKKTDVAECGPGGS</sequence>
<name>BRD7_HUMAN</name>
<protein>
    <recommendedName>
        <fullName>Bromodomain-containing protein 7</fullName>
    </recommendedName>
    <alternativeName>
        <fullName>75 kDa bromodomain protein</fullName>
    </alternativeName>
    <alternativeName>
        <fullName>Protein CELTIX-1</fullName>
    </alternativeName>
</protein>
<accession>Q9NPI1</accession>
<accession>Q4VC09</accession>
<accession>Q8N2L9</accession>
<accession>Q96KA4</accession>
<accession>Q9BV48</accession>
<accession>Q9UH59</accession>
<keyword id="KW-0002">3D-structure</keyword>
<keyword id="KW-0007">Acetylation</keyword>
<keyword id="KW-0025">Alternative splicing</keyword>
<keyword id="KW-0103">Bromodomain</keyword>
<keyword id="KW-0131">Cell cycle</keyword>
<keyword id="KW-0158">Chromosome</keyword>
<keyword id="KW-0175">Coiled coil</keyword>
<keyword id="KW-1017">Isopeptide bond</keyword>
<keyword id="KW-0539">Nucleus</keyword>
<keyword id="KW-0597">Phosphoprotein</keyword>
<keyword id="KW-1267">Proteomics identification</keyword>
<keyword id="KW-1185">Reference proteome</keyword>
<keyword id="KW-0804">Transcription</keyword>
<keyword id="KW-0805">Transcription regulation</keyword>
<keyword id="KW-0043">Tumor suppressor</keyword>
<keyword id="KW-0832">Ubl conjugation</keyword>
<keyword id="KW-0879">Wnt signaling pathway</keyword>
<gene>
    <name type="primary">BRD7</name>
    <name type="synonym">BP75</name>
    <name type="synonym">CELTIX1</name>
</gene>
<evidence type="ECO:0000250" key="1"/>
<evidence type="ECO:0000250" key="2">
    <source>
        <dbReference type="UniProtKB" id="O88665"/>
    </source>
</evidence>
<evidence type="ECO:0000255" key="3"/>
<evidence type="ECO:0000255" key="4">
    <source>
        <dbReference type="PROSITE-ProRule" id="PRU00035"/>
    </source>
</evidence>
<evidence type="ECO:0000256" key="5">
    <source>
        <dbReference type="SAM" id="MobiDB-lite"/>
    </source>
</evidence>
<evidence type="ECO:0000269" key="6">
    <source>
    </source>
</evidence>
<evidence type="ECO:0000269" key="7">
    <source>
    </source>
</evidence>
<evidence type="ECO:0000269" key="8">
    <source>
    </source>
</evidence>
<evidence type="ECO:0000269" key="9">
    <source>
    </source>
</evidence>
<evidence type="ECO:0000269" key="10">
    <source>
    </source>
</evidence>
<evidence type="ECO:0000269" key="11">
    <source>
    </source>
</evidence>
<evidence type="ECO:0000269" key="12">
    <source>
    </source>
</evidence>
<evidence type="ECO:0000269" key="13">
    <source>
    </source>
</evidence>
<evidence type="ECO:0000269" key="14">
    <source>
    </source>
</evidence>
<evidence type="ECO:0000303" key="15">
    <source>
    </source>
</evidence>
<evidence type="ECO:0000303" key="16">
    <source>
    </source>
</evidence>
<evidence type="ECO:0000305" key="17"/>
<evidence type="ECO:0007744" key="18">
    <source>
    </source>
</evidence>
<evidence type="ECO:0007744" key="19">
    <source>
    </source>
</evidence>
<evidence type="ECO:0007744" key="20">
    <source>
    </source>
</evidence>
<evidence type="ECO:0007744" key="21">
    <source>
    </source>
</evidence>
<evidence type="ECO:0007744" key="22">
    <source>
    </source>
</evidence>
<evidence type="ECO:0007744" key="23">
    <source>
    </source>
</evidence>
<evidence type="ECO:0007744" key="24">
    <source>
    </source>
</evidence>
<evidence type="ECO:0007829" key="25">
    <source>
        <dbReference type="PDB" id="2I7K"/>
    </source>
</evidence>
<evidence type="ECO:0007829" key="26">
    <source>
        <dbReference type="PDB" id="5MQ1"/>
    </source>
</evidence>
<evidence type="ECO:0007829" key="27">
    <source>
        <dbReference type="PDB" id="6V0Q"/>
    </source>
</evidence>
<evidence type="ECO:0007829" key="28">
    <source>
        <dbReference type="PDB" id="7VDV"/>
    </source>
</evidence>
<reference key="1">
    <citation type="journal article" date="2000" name="J. Cell. Physiol.">
        <title>Molecular characterization of celtix-1, a bromodomain protein interacting with the transcription factor interferon regulatory factor 2.</title>
        <authorList>
            <person name="Staal A."/>
            <person name="Enserink J.M."/>
            <person name="Stein J.L."/>
            <person name="Stein G.S."/>
            <person name="van Wijnen A.J."/>
        </authorList>
    </citation>
    <scope>NUCLEOTIDE SEQUENCE [MRNA] (ISOFORM 2)</scope>
    <scope>INTERACTION WITH IRF2</scope>
    <scope>SUBCELLULAR LOCATION</scope>
    <source>
        <tissue>Cervix carcinoma</tissue>
    </source>
</reference>
<reference key="2">
    <citation type="journal article" date="2003" name="Biochem. J.">
        <title>Regulation of transcription by the heterogeneous nuclear ribonucleoprotein E1B-AP5 is mediated by complex formation with the novel bromodomain-containing protein BRD7.</title>
        <authorList>
            <person name="Kzhyshkowska J.G."/>
            <person name="Rusch A."/>
            <person name="Wolf H."/>
            <person name="Dobner T."/>
        </authorList>
    </citation>
    <scope>NUCLEOTIDE SEQUENCE [MRNA] (ISOFORM 1)</scope>
    <scope>INTERACTION WITH HNRPUL1</scope>
    <scope>ASSOCIATION WITH HISTONES AND HNRPUL1</scope>
    <source>
        <tissue>Fetal brain</tissue>
    </source>
</reference>
<reference key="3">
    <citation type="submission" date="1999-05" db="EMBL/GenBank/DDBJ databases">
        <authorList>
            <person name="Yu Y."/>
            <person name="Li G.Y."/>
        </authorList>
    </citation>
    <scope>NUCLEOTIDE SEQUENCE [MRNA] (ISOFORM 1)</scope>
</reference>
<reference key="4">
    <citation type="journal article" date="2004" name="Nature">
        <title>The sequence and analysis of duplication-rich human chromosome 16.</title>
        <authorList>
            <person name="Martin J."/>
            <person name="Han C."/>
            <person name="Gordon L.A."/>
            <person name="Terry A."/>
            <person name="Prabhakar S."/>
            <person name="She X."/>
            <person name="Xie G."/>
            <person name="Hellsten U."/>
            <person name="Chan Y.M."/>
            <person name="Altherr M."/>
            <person name="Couronne O."/>
            <person name="Aerts A."/>
            <person name="Bajorek E."/>
            <person name="Black S."/>
            <person name="Blumer H."/>
            <person name="Branscomb E."/>
            <person name="Brown N.C."/>
            <person name="Bruno W.J."/>
            <person name="Buckingham J.M."/>
            <person name="Callen D.F."/>
            <person name="Campbell C.S."/>
            <person name="Campbell M.L."/>
            <person name="Campbell E.W."/>
            <person name="Caoile C."/>
            <person name="Challacombe J.F."/>
            <person name="Chasteen L.A."/>
            <person name="Chertkov O."/>
            <person name="Chi H.C."/>
            <person name="Christensen M."/>
            <person name="Clark L.M."/>
            <person name="Cohn J.D."/>
            <person name="Denys M."/>
            <person name="Detter J.C."/>
            <person name="Dickson M."/>
            <person name="Dimitrijevic-Bussod M."/>
            <person name="Escobar J."/>
            <person name="Fawcett J.J."/>
            <person name="Flowers D."/>
            <person name="Fotopulos D."/>
            <person name="Glavina T."/>
            <person name="Gomez M."/>
            <person name="Gonzales E."/>
            <person name="Goodstein D."/>
            <person name="Goodwin L.A."/>
            <person name="Grady D.L."/>
            <person name="Grigoriev I."/>
            <person name="Groza M."/>
            <person name="Hammon N."/>
            <person name="Hawkins T."/>
            <person name="Haydu L."/>
            <person name="Hildebrand C.E."/>
            <person name="Huang W."/>
            <person name="Israni S."/>
            <person name="Jett J."/>
            <person name="Jewett P.B."/>
            <person name="Kadner K."/>
            <person name="Kimball H."/>
            <person name="Kobayashi A."/>
            <person name="Krawczyk M.-C."/>
            <person name="Leyba T."/>
            <person name="Longmire J.L."/>
            <person name="Lopez F."/>
            <person name="Lou Y."/>
            <person name="Lowry S."/>
            <person name="Ludeman T."/>
            <person name="Manohar C.F."/>
            <person name="Mark G.A."/>
            <person name="McMurray K.L."/>
            <person name="Meincke L.J."/>
            <person name="Morgan J."/>
            <person name="Moyzis R.K."/>
            <person name="Mundt M.O."/>
            <person name="Munk A.C."/>
            <person name="Nandkeshwar R.D."/>
            <person name="Pitluck S."/>
            <person name="Pollard M."/>
            <person name="Predki P."/>
            <person name="Parson-Quintana B."/>
            <person name="Ramirez L."/>
            <person name="Rash S."/>
            <person name="Retterer J."/>
            <person name="Ricke D.O."/>
            <person name="Robinson D.L."/>
            <person name="Rodriguez A."/>
            <person name="Salamov A."/>
            <person name="Saunders E.H."/>
            <person name="Scott D."/>
            <person name="Shough T."/>
            <person name="Stallings R.L."/>
            <person name="Stalvey M."/>
            <person name="Sutherland R.D."/>
            <person name="Tapia R."/>
            <person name="Tesmer J.G."/>
            <person name="Thayer N."/>
            <person name="Thompson L.S."/>
            <person name="Tice H."/>
            <person name="Torney D.C."/>
            <person name="Tran-Gyamfi M."/>
            <person name="Tsai M."/>
            <person name="Ulanovsky L.E."/>
            <person name="Ustaszewska A."/>
            <person name="Vo N."/>
            <person name="White P.S."/>
            <person name="Williams A.L."/>
            <person name="Wills P.L."/>
            <person name="Wu J.-R."/>
            <person name="Wu K."/>
            <person name="Yang J."/>
            <person name="DeJong P."/>
            <person name="Bruce D."/>
            <person name="Doggett N.A."/>
            <person name="Deaven L."/>
            <person name="Schmutz J."/>
            <person name="Grimwood J."/>
            <person name="Richardson P."/>
            <person name="Rokhsar D.S."/>
            <person name="Eichler E.E."/>
            <person name="Gilna P."/>
            <person name="Lucas S.M."/>
            <person name="Myers R.M."/>
            <person name="Rubin E.M."/>
            <person name="Pennacchio L.A."/>
        </authorList>
    </citation>
    <scope>NUCLEOTIDE SEQUENCE [LARGE SCALE GENOMIC DNA]</scope>
</reference>
<reference key="5">
    <citation type="journal article" date="2004" name="Genome Res.">
        <title>The status, quality, and expansion of the NIH full-length cDNA project: the Mammalian Gene Collection (MGC).</title>
        <authorList>
            <consortium name="The MGC Project Team"/>
        </authorList>
    </citation>
    <scope>NUCLEOTIDE SEQUENCE [LARGE SCALE MRNA] (ISOFORM 1)</scope>
    <scope>NUCLEOTIDE SEQUENCE [LARGE SCALE MRNA] OF 198-651 (ISOFORM 2)</scope>
    <source>
        <tissue>Brain</tissue>
        <tissue>Skin</tissue>
    </source>
</reference>
<reference key="6">
    <citation type="journal article" date="2004" name="Nat. Genet.">
        <title>Complete sequencing and characterization of 21,243 full-length human cDNAs.</title>
        <authorList>
            <person name="Ota T."/>
            <person name="Suzuki Y."/>
            <person name="Nishikawa T."/>
            <person name="Otsuki T."/>
            <person name="Sugiyama T."/>
            <person name="Irie R."/>
            <person name="Wakamatsu A."/>
            <person name="Hayashi K."/>
            <person name="Sato H."/>
            <person name="Nagai K."/>
            <person name="Kimura K."/>
            <person name="Makita H."/>
            <person name="Sekine M."/>
            <person name="Obayashi M."/>
            <person name="Nishi T."/>
            <person name="Shibahara T."/>
            <person name="Tanaka T."/>
            <person name="Ishii S."/>
            <person name="Yamamoto J."/>
            <person name="Saito K."/>
            <person name="Kawai Y."/>
            <person name="Isono Y."/>
            <person name="Nakamura Y."/>
            <person name="Nagahari K."/>
            <person name="Murakami K."/>
            <person name="Yasuda T."/>
            <person name="Iwayanagi T."/>
            <person name="Wagatsuma M."/>
            <person name="Shiratori A."/>
            <person name="Sudo H."/>
            <person name="Hosoiri T."/>
            <person name="Kaku Y."/>
            <person name="Kodaira H."/>
            <person name="Kondo H."/>
            <person name="Sugawara M."/>
            <person name="Takahashi M."/>
            <person name="Kanda K."/>
            <person name="Yokoi T."/>
            <person name="Furuya T."/>
            <person name="Kikkawa E."/>
            <person name="Omura Y."/>
            <person name="Abe K."/>
            <person name="Kamihara K."/>
            <person name="Katsuta N."/>
            <person name="Sato K."/>
            <person name="Tanikawa M."/>
            <person name="Yamazaki M."/>
            <person name="Ninomiya K."/>
            <person name="Ishibashi T."/>
            <person name="Yamashita H."/>
            <person name="Murakawa K."/>
            <person name="Fujimori K."/>
            <person name="Tanai H."/>
            <person name="Kimata M."/>
            <person name="Watanabe M."/>
            <person name="Hiraoka S."/>
            <person name="Chiba Y."/>
            <person name="Ishida S."/>
            <person name="Ono Y."/>
            <person name="Takiguchi S."/>
            <person name="Watanabe S."/>
            <person name="Yosida M."/>
            <person name="Hotuta T."/>
            <person name="Kusano J."/>
            <person name="Kanehori K."/>
            <person name="Takahashi-Fujii A."/>
            <person name="Hara H."/>
            <person name="Tanase T.-O."/>
            <person name="Nomura Y."/>
            <person name="Togiya S."/>
            <person name="Komai F."/>
            <person name="Hara R."/>
            <person name="Takeuchi K."/>
            <person name="Arita M."/>
            <person name="Imose N."/>
            <person name="Musashino K."/>
            <person name="Yuuki H."/>
            <person name="Oshima A."/>
            <person name="Sasaki N."/>
            <person name="Aotsuka S."/>
            <person name="Yoshikawa Y."/>
            <person name="Matsunawa H."/>
            <person name="Ichihara T."/>
            <person name="Shiohata N."/>
            <person name="Sano S."/>
            <person name="Moriya S."/>
            <person name="Momiyama H."/>
            <person name="Satoh N."/>
            <person name="Takami S."/>
            <person name="Terashima Y."/>
            <person name="Suzuki O."/>
            <person name="Nakagawa S."/>
            <person name="Senoh A."/>
            <person name="Mizoguchi H."/>
            <person name="Goto Y."/>
            <person name="Shimizu F."/>
            <person name="Wakebe H."/>
            <person name="Hishigaki H."/>
            <person name="Watanabe T."/>
            <person name="Sugiyama A."/>
            <person name="Takemoto M."/>
            <person name="Kawakami B."/>
            <person name="Yamazaki M."/>
            <person name="Watanabe K."/>
            <person name="Kumagai A."/>
            <person name="Itakura S."/>
            <person name="Fukuzumi Y."/>
            <person name="Fujimori Y."/>
            <person name="Komiyama M."/>
            <person name="Tashiro H."/>
            <person name="Tanigami A."/>
            <person name="Fujiwara T."/>
            <person name="Ono T."/>
            <person name="Yamada K."/>
            <person name="Fujii Y."/>
            <person name="Ozaki K."/>
            <person name="Hirao M."/>
            <person name="Ohmori Y."/>
            <person name="Kawabata A."/>
            <person name="Hikiji T."/>
            <person name="Kobatake N."/>
            <person name="Inagaki H."/>
            <person name="Ikema Y."/>
            <person name="Okamoto S."/>
            <person name="Okitani R."/>
            <person name="Kawakami T."/>
            <person name="Noguchi S."/>
            <person name="Itoh T."/>
            <person name="Shigeta K."/>
            <person name="Senba T."/>
            <person name="Matsumura K."/>
            <person name="Nakajima Y."/>
            <person name="Mizuno T."/>
            <person name="Morinaga M."/>
            <person name="Sasaki M."/>
            <person name="Togashi T."/>
            <person name="Oyama M."/>
            <person name="Hata H."/>
            <person name="Watanabe M."/>
            <person name="Komatsu T."/>
            <person name="Mizushima-Sugano J."/>
            <person name="Satoh T."/>
            <person name="Shirai Y."/>
            <person name="Takahashi Y."/>
            <person name="Nakagawa K."/>
            <person name="Okumura K."/>
            <person name="Nagase T."/>
            <person name="Nomura N."/>
            <person name="Kikuchi H."/>
            <person name="Masuho Y."/>
            <person name="Yamashita R."/>
            <person name="Nakai K."/>
            <person name="Yada T."/>
            <person name="Nakamura Y."/>
            <person name="Ohara O."/>
            <person name="Isogai T."/>
            <person name="Sugano S."/>
        </authorList>
    </citation>
    <scope>NUCLEOTIDE SEQUENCE [LARGE SCALE MRNA] OF 236-651 (ISOFORM 1)</scope>
    <source>
        <tissue>Embryo</tissue>
    </source>
</reference>
<reference key="7">
    <citation type="journal article" date="2006" name="Cell">
        <title>Global, in vivo, and site-specific phosphorylation dynamics in signaling networks.</title>
        <authorList>
            <person name="Olsen J.V."/>
            <person name="Blagoev B."/>
            <person name="Gnad F."/>
            <person name="Macek B."/>
            <person name="Kumar C."/>
            <person name="Mortensen P."/>
            <person name="Mann M."/>
        </authorList>
    </citation>
    <scope>PHOSPHORYLATION [LARGE SCALE ANALYSIS] AT SER-279</scope>
    <scope>IDENTIFICATION BY MASS SPECTROMETRY [LARGE SCALE ANALYSIS]</scope>
    <source>
        <tissue>Cervix carcinoma</tissue>
    </source>
</reference>
<reference key="8">
    <citation type="journal article" date="2006" name="J. Cell. Biochem.">
        <title>The transcriptional regulation role of BRD7 by binding to acetylated histone through bromodomain.</title>
        <authorList>
            <person name="Peng C."/>
            <person name="Zhou J."/>
            <person name="Liu H.Y."/>
            <person name="Zhou M."/>
            <person name="Wang L.L."/>
            <person name="Zhang Q.H."/>
            <person name="Yang Y.X."/>
            <person name="Xiong W."/>
            <person name="Shen S.R."/>
            <person name="Li X.L."/>
            <person name="Li G.Y."/>
        </authorList>
    </citation>
    <scope>FUNCTION</scope>
    <scope>SUBCELLULAR LOCATION</scope>
    <scope>INTERACTION WITH ACETYLATED HISTONE H3</scope>
</reference>
<reference key="9">
    <citation type="journal article" date="2006" name="J. Cell. Biochem.">
        <title>Identification of nuclear localization signal that governs nuclear import of BRD7 and its essential roles in inhibiting cell cycle progression.</title>
        <authorList>
            <person name="Zhou M."/>
            <person name="Liu H."/>
            <person name="Xu X."/>
            <person name="Zhou H."/>
            <person name="Li X."/>
            <person name="Peng C."/>
            <person name="Shen S."/>
            <person name="Xiong W."/>
            <person name="Ma J."/>
            <person name="Zeng Z."/>
            <person name="Fang S."/>
            <person name="Nie X."/>
            <person name="Yang Y."/>
            <person name="Zhou J."/>
            <person name="Xiang J."/>
            <person name="Cao L."/>
            <person name="Peng S."/>
            <person name="Li S."/>
            <person name="Li G."/>
        </authorList>
    </citation>
    <scope>FUNCTION</scope>
    <scope>NUCLEAR LOCALIZATION SIGNAL</scope>
    <scope>SUBCELLULAR LOCATION</scope>
</reference>
<reference key="10">
    <citation type="journal article" date="2008" name="J. Proteome Res.">
        <title>Phosphorylation analysis of primary human T lymphocytes using sequential IMAC and titanium oxide enrichment.</title>
        <authorList>
            <person name="Carrascal M."/>
            <person name="Ovelleiro D."/>
            <person name="Casas V."/>
            <person name="Gay M."/>
            <person name="Abian J."/>
        </authorList>
    </citation>
    <scope>IDENTIFICATION BY MASS SPECTROMETRY [LARGE SCALE ANALYSIS]</scope>
    <source>
        <tissue>T-cell</tissue>
    </source>
</reference>
<reference key="11">
    <citation type="journal article" date="2010" name="Cancer Res.">
        <title>BRD7, a subunit of SWI/SNF complexes, binds directly to BRCA1 and regulates BRCA1-dependent transcription.</title>
        <authorList>
            <person name="Harte M.T."/>
            <person name="O'Brien G.J."/>
            <person name="Ryan N.M."/>
            <person name="Gorski J.J."/>
            <person name="Savage K.I."/>
            <person name="Crawford N.T."/>
            <person name="Mullan P.B."/>
            <person name="Harkin D.P."/>
        </authorList>
    </citation>
    <scope>FUNCTION</scope>
    <scope>PROMOTER BINDING</scope>
    <scope>INTERACTION WITH BRCA1</scope>
</reference>
<reference key="12">
    <citation type="journal article" date="2010" name="Nat. Cell Biol.">
        <title>BRD7 is a candidate tumour suppressor gene required for p53 function.</title>
        <authorList>
            <person name="Drost J."/>
            <person name="Mantovani F."/>
            <person name="Tocco F."/>
            <person name="Elkon R."/>
            <person name="Comel A."/>
            <person name="Holstege H."/>
            <person name="Kerkhoven R."/>
            <person name="Jonkers J."/>
            <person name="Voorhoeve P.M."/>
            <person name="Agami R."/>
            <person name="Del Sal G."/>
        </authorList>
    </citation>
    <scope>FUNCTION</scope>
    <scope>SUBCELLULAR LOCATION</scope>
    <scope>INTERACTION WITH TP53 AND EP300</scope>
</reference>
<reference key="13">
    <citation type="journal article" date="2010" name="Proc. Natl. Acad. Sci. U.S.A.">
        <title>Polybromo-associated BRG1-associated factor components BRD7 and BAF180 are critical regulators of p53 required for induction of replicative senescence.</title>
        <authorList>
            <person name="Burrows A.E."/>
            <person name="Smogorzewska A."/>
            <person name="Elledge S.J."/>
        </authorList>
    </citation>
    <scope>FUNCTION</scope>
    <scope>INTERACTION WITH TP53</scope>
</reference>
<reference key="14">
    <citation type="journal article" date="2010" name="Sci. Signal.">
        <title>Quantitative phosphoproteomics reveals widespread full phosphorylation site occupancy during mitosis.</title>
        <authorList>
            <person name="Olsen J.V."/>
            <person name="Vermeulen M."/>
            <person name="Santamaria A."/>
            <person name="Kumar C."/>
            <person name="Miller M.L."/>
            <person name="Jensen L.J."/>
            <person name="Gnad F."/>
            <person name="Cox J."/>
            <person name="Jensen T.S."/>
            <person name="Nigg E.A."/>
            <person name="Brunak S."/>
            <person name="Mann M."/>
        </authorList>
    </citation>
    <scope>PHOSPHORYLATION [LARGE SCALE ANALYSIS] AT SER-279</scope>
    <scope>IDENTIFICATION BY MASS SPECTROMETRY [LARGE SCALE ANALYSIS]</scope>
    <source>
        <tissue>Cervix carcinoma</tissue>
    </source>
</reference>
<reference key="15">
    <citation type="journal article" date="2011" name="Sci. Signal.">
        <title>System-wide temporal characterization of the proteome and phosphoproteome of human embryonic stem cell differentiation.</title>
        <authorList>
            <person name="Rigbolt K.T."/>
            <person name="Prokhorova T.A."/>
            <person name="Akimov V."/>
            <person name="Henningsen J."/>
            <person name="Johansen P.T."/>
            <person name="Kratchmarova I."/>
            <person name="Kassem M."/>
            <person name="Mann M."/>
            <person name="Olsen J.V."/>
            <person name="Blagoev B."/>
        </authorList>
    </citation>
    <scope>PHOSPHORYLATION [LARGE SCALE ANALYSIS] AT SER-279</scope>
    <scope>IDENTIFICATION BY MASS SPECTROMETRY [LARGE SCALE ANALYSIS]</scope>
</reference>
<reference key="16">
    <citation type="journal article" date="2013" name="J. Proteome Res.">
        <title>Toward a comprehensive characterization of a human cancer cell phosphoproteome.</title>
        <authorList>
            <person name="Zhou H."/>
            <person name="Di Palma S."/>
            <person name="Preisinger C."/>
            <person name="Peng M."/>
            <person name="Polat A.N."/>
            <person name="Heck A.J."/>
            <person name="Mohammed S."/>
        </authorList>
    </citation>
    <scope>PHOSPHORYLATION [LARGE SCALE ANALYSIS] AT SER-279; SER-289; SER-380 AND THR-514</scope>
    <scope>IDENTIFICATION BY MASS SPECTROMETRY [LARGE SCALE ANALYSIS]</scope>
    <source>
        <tissue>Cervix carcinoma</tissue>
        <tissue>Erythroleukemia</tissue>
    </source>
</reference>
<reference key="17">
    <citation type="journal article" date="2014" name="J. Proteomics">
        <title>An enzyme assisted RP-RPLC approach for in-depth analysis of human liver phosphoproteome.</title>
        <authorList>
            <person name="Bian Y."/>
            <person name="Song C."/>
            <person name="Cheng K."/>
            <person name="Dong M."/>
            <person name="Wang F."/>
            <person name="Huang J."/>
            <person name="Sun D."/>
            <person name="Wang L."/>
            <person name="Ye M."/>
            <person name="Zou H."/>
        </authorList>
    </citation>
    <scope>PHOSPHORYLATION [LARGE SCALE ANALYSIS] AT SER-621</scope>
    <scope>IDENTIFICATION BY MASS SPECTROMETRY [LARGE SCALE ANALYSIS]</scope>
    <source>
        <tissue>Liver</tissue>
    </source>
</reference>
<reference key="18">
    <citation type="journal article" date="2015" name="Genes Dev.">
        <title>Screen identifies bromodomain protein ZMYND8 in chromatin recognition of transcription-associated DNA damage that promotes homologous recombination.</title>
        <authorList>
            <person name="Gong F."/>
            <person name="Chiu L.Y."/>
            <person name="Cox B."/>
            <person name="Aymard F."/>
            <person name="Clouaire T."/>
            <person name="Leung J.W."/>
            <person name="Cammarata M."/>
            <person name="Perez M."/>
            <person name="Agarwal P."/>
            <person name="Brodbelt J.S."/>
            <person name="Legube G."/>
            <person name="Miller K.M."/>
        </authorList>
    </citation>
    <scope>SUBCELLULAR LOCATION</scope>
</reference>
<reference key="19">
    <citation type="journal article" date="2015" name="Mol. Cell. Proteomics">
        <title>System-wide analysis of SUMOylation dynamics in response to replication stress reveals novel small ubiquitin-like modified target proteins and acceptor lysines relevant for genome stability.</title>
        <authorList>
            <person name="Xiao Z."/>
            <person name="Chang J.G."/>
            <person name="Hendriks I.A."/>
            <person name="Sigurdsson J.O."/>
            <person name="Olsen J.V."/>
            <person name="Vertegaal A.C."/>
        </authorList>
    </citation>
    <scope>SUMOYLATION [LARGE SCALE ANALYSIS] AT LYS-21; LYS-127 AND LYS-305</scope>
    <scope>IDENTIFICATION BY MASS SPECTROMETRY [LARGE SCALE ANALYSIS]</scope>
</reference>
<reference key="20">
    <citation type="journal article" date="2017" name="Nat. Struct. Mol. Biol.">
        <title>Site-specific mapping of the human SUMO proteome reveals co-modification with phosphorylation.</title>
        <authorList>
            <person name="Hendriks I.A."/>
            <person name="Lyon D."/>
            <person name="Young C."/>
            <person name="Jensen L.J."/>
            <person name="Vertegaal A.C."/>
            <person name="Nielsen M.L."/>
        </authorList>
    </citation>
    <scope>SUMOYLATION [LARGE SCALE ANALYSIS] AT LYS-21; LYS-52; LYS-127; LYS-186; LYS-197; LYS-201; LYS-212; LYS-241; LYS-305; LYS-307; LYS-344 AND LYS-389</scope>
    <scope>IDENTIFICATION BY MASS SPECTROMETRY [LARGE SCALE ANALYSIS]</scope>
</reference>
<reference key="21">
    <citation type="journal article" date="2007" name="Biochem. Biophys. Res. Commun.">
        <title>Solution structure of BRD7 bromodomain and its interaction with acetylated peptides from histone H3 and H4.</title>
        <authorList>
            <person name="Sun H."/>
            <person name="Liu J."/>
            <person name="Zhang J."/>
            <person name="Shen W."/>
            <person name="Huang H."/>
            <person name="Xu C."/>
            <person name="Dai H."/>
            <person name="Wu J."/>
            <person name="Shi Y."/>
        </authorList>
    </citation>
    <scope>STRUCTURE BY NMR OF 129-236</scope>
    <scope>INTERACTION WITH ACETYLATED HISTONE PEPTIDES</scope>
</reference>
<dbReference type="EMBL" id="AF213969">
    <property type="protein sequence ID" value="AAF19526.1"/>
    <property type="molecule type" value="mRNA"/>
</dbReference>
<dbReference type="EMBL" id="AJ271881">
    <property type="protein sequence ID" value="CAB72445.1"/>
    <property type="molecule type" value="mRNA"/>
</dbReference>
<dbReference type="EMBL" id="AF152604">
    <property type="protein sequence ID" value="AAF75126.1"/>
    <property type="molecule type" value="mRNA"/>
</dbReference>
<dbReference type="EMBL" id="BC001611">
    <property type="protein sequence ID" value="AAH01611.1"/>
    <property type="status" value="ALT_INIT"/>
    <property type="molecule type" value="mRNA"/>
</dbReference>
<dbReference type="EMBL" id="AC007493">
    <property type="status" value="NOT_ANNOTATED_CDS"/>
    <property type="molecule type" value="Genomic_DNA"/>
</dbReference>
<dbReference type="EMBL" id="AC007597">
    <property type="status" value="NOT_ANNOTATED_CDS"/>
    <property type="molecule type" value="Genomic_DNA"/>
</dbReference>
<dbReference type="EMBL" id="AC023826">
    <property type="status" value="NOT_ANNOTATED_CDS"/>
    <property type="molecule type" value="Genomic_DNA"/>
</dbReference>
<dbReference type="EMBL" id="BC050728">
    <property type="protein sequence ID" value="AAH50728.1"/>
    <property type="molecule type" value="mRNA"/>
</dbReference>
<dbReference type="EMBL" id="BC094706">
    <property type="protein sequence ID" value="AAH94706.1"/>
    <property type="molecule type" value="mRNA"/>
</dbReference>
<dbReference type="EMBL" id="AK027308">
    <property type="protein sequence ID" value="BAB55031.1"/>
    <property type="status" value="ALT_INIT"/>
    <property type="molecule type" value="mRNA"/>
</dbReference>
<dbReference type="EMBL" id="AK074613">
    <property type="protein sequence ID" value="BAC11089.1"/>
    <property type="status" value="ALT_INIT"/>
    <property type="molecule type" value="mRNA"/>
</dbReference>
<dbReference type="CCDS" id="CCDS10742.1">
    <molecule id="Q9NPI1-1"/>
</dbReference>
<dbReference type="CCDS" id="CCDS54007.1">
    <molecule id="Q9NPI1-2"/>
</dbReference>
<dbReference type="RefSeq" id="NP_001167455.1">
    <molecule id="Q9NPI1-2"/>
    <property type="nucleotide sequence ID" value="NM_001173984.3"/>
</dbReference>
<dbReference type="RefSeq" id="NP_037395.2">
    <molecule id="Q9NPI1-1"/>
    <property type="nucleotide sequence ID" value="NM_013263.4"/>
</dbReference>
<dbReference type="PDB" id="2I7K">
    <property type="method" value="NMR"/>
    <property type="chains" value="A=129-236"/>
</dbReference>
<dbReference type="PDB" id="5MQ1">
    <property type="method" value="X-ray"/>
    <property type="resolution" value="1.50 A"/>
    <property type="chains" value="A=128-239"/>
</dbReference>
<dbReference type="PDB" id="6PPA">
    <property type="method" value="X-ray"/>
    <property type="resolution" value="1.77 A"/>
    <property type="chains" value="A=130-250"/>
</dbReference>
<dbReference type="PDB" id="6V0Q">
    <property type="method" value="X-ray"/>
    <property type="resolution" value="1.69 A"/>
    <property type="chains" value="A/B/C/D=130-250"/>
</dbReference>
<dbReference type="PDB" id="6V16">
    <property type="method" value="X-ray"/>
    <property type="resolution" value="1.90 A"/>
    <property type="chains" value="A/B=130-250"/>
</dbReference>
<dbReference type="PDB" id="6V17">
    <property type="method" value="X-ray"/>
    <property type="resolution" value="2.05 A"/>
    <property type="chains" value="A/B=130-250"/>
</dbReference>
<dbReference type="PDB" id="6V1E">
    <property type="method" value="X-ray"/>
    <property type="resolution" value="2.30 A"/>
    <property type="chains" value="A=129-250"/>
</dbReference>
<dbReference type="PDB" id="6V1F">
    <property type="method" value="X-ray"/>
    <property type="resolution" value="2.00 A"/>
    <property type="chains" value="A=129-250"/>
</dbReference>
<dbReference type="PDB" id="6V1H">
    <property type="method" value="X-ray"/>
    <property type="resolution" value="1.93 A"/>
    <property type="chains" value="A=129-250"/>
</dbReference>
<dbReference type="PDB" id="7VDV">
    <property type="method" value="EM"/>
    <property type="resolution" value="3.40 A"/>
    <property type="chains" value="T=1-651"/>
</dbReference>
<dbReference type="PDB" id="7Y8R">
    <property type="method" value="EM"/>
    <property type="resolution" value="4.40 A"/>
    <property type="chains" value="S=1-651"/>
</dbReference>
<dbReference type="PDBsum" id="2I7K"/>
<dbReference type="PDBsum" id="5MQ1"/>
<dbReference type="PDBsum" id="6PPA"/>
<dbReference type="PDBsum" id="6V0Q"/>
<dbReference type="PDBsum" id="6V16"/>
<dbReference type="PDBsum" id="6V17"/>
<dbReference type="PDBsum" id="6V1E"/>
<dbReference type="PDBsum" id="6V1F"/>
<dbReference type="PDBsum" id="6V1H"/>
<dbReference type="PDBsum" id="7VDV"/>
<dbReference type="PDBsum" id="7Y8R"/>
<dbReference type="BMRB" id="Q9NPI1"/>
<dbReference type="EMDB" id="EMD-31926"/>
<dbReference type="EMDB" id="EMD-33684"/>
<dbReference type="SMR" id="Q9NPI1"/>
<dbReference type="BioGRID" id="118883">
    <property type="interactions" value="636"/>
</dbReference>
<dbReference type="ComplexPortal" id="CPX-1196">
    <property type="entry name" value="Polybromo-associated SWI/SNF ATP-dependent chromatin remodeling complex, ACTL6B variant"/>
</dbReference>
<dbReference type="ComplexPortal" id="CPX-1199">
    <property type="entry name" value="Polybromo-associated SWI/SNF ATP-dependent chromatin remodeling complex, ACTL6A variant"/>
</dbReference>
<dbReference type="CORUM" id="Q9NPI1"/>
<dbReference type="DIP" id="DIP-32509N"/>
<dbReference type="FunCoup" id="Q9NPI1">
    <property type="interactions" value="3826"/>
</dbReference>
<dbReference type="IntAct" id="Q9NPI1">
    <property type="interactions" value="127"/>
</dbReference>
<dbReference type="MINT" id="Q9NPI1"/>
<dbReference type="STRING" id="9606.ENSP00000378181"/>
<dbReference type="BindingDB" id="Q9NPI1"/>
<dbReference type="ChEMBL" id="CHEMBL3085622"/>
<dbReference type="GuidetoPHARMACOLOGY" id="2726"/>
<dbReference type="GlyGen" id="Q9NPI1">
    <property type="glycosylation" value="2 sites, 1 O-linked glycan (1 site)"/>
</dbReference>
<dbReference type="iPTMnet" id="Q9NPI1"/>
<dbReference type="MetOSite" id="Q9NPI1"/>
<dbReference type="PhosphoSitePlus" id="Q9NPI1"/>
<dbReference type="SwissPalm" id="Q9NPI1"/>
<dbReference type="BioMuta" id="BRD7"/>
<dbReference type="DMDM" id="74734307"/>
<dbReference type="jPOST" id="Q9NPI1"/>
<dbReference type="MassIVE" id="Q9NPI1"/>
<dbReference type="PaxDb" id="9606-ENSP00000378181"/>
<dbReference type="PeptideAtlas" id="Q9NPI1"/>
<dbReference type="ProteomicsDB" id="82017">
    <molecule id="Q9NPI1-1"/>
</dbReference>
<dbReference type="ProteomicsDB" id="82018">
    <molecule id="Q9NPI1-2"/>
</dbReference>
<dbReference type="Pumba" id="Q9NPI1"/>
<dbReference type="ABCD" id="Q9NPI1">
    <property type="antibodies" value="1 sequenced antibody"/>
</dbReference>
<dbReference type="Antibodypedia" id="14527">
    <property type="antibodies" value="234 antibodies from 32 providers"/>
</dbReference>
<dbReference type="DNASU" id="29117"/>
<dbReference type="Ensembl" id="ENST00000394688.8">
    <molecule id="Q9NPI1-1"/>
    <property type="protein sequence ID" value="ENSP00000378180.3"/>
    <property type="gene ID" value="ENSG00000166164.17"/>
</dbReference>
<dbReference type="Ensembl" id="ENST00000394689.2">
    <molecule id="Q9NPI1-2"/>
    <property type="protein sequence ID" value="ENSP00000378181.2"/>
    <property type="gene ID" value="ENSG00000166164.17"/>
</dbReference>
<dbReference type="GeneID" id="29117"/>
<dbReference type="KEGG" id="hsa:29117"/>
<dbReference type="MANE-Select" id="ENST00000394688.8">
    <property type="protein sequence ID" value="ENSP00000378180.3"/>
    <property type="RefSeq nucleotide sequence ID" value="NM_013263.5"/>
    <property type="RefSeq protein sequence ID" value="NP_037395.2"/>
</dbReference>
<dbReference type="UCSC" id="uc002ege.3">
    <molecule id="Q9NPI1-1"/>
    <property type="organism name" value="human"/>
</dbReference>
<dbReference type="AGR" id="HGNC:14310"/>
<dbReference type="CTD" id="29117"/>
<dbReference type="DisGeNET" id="29117"/>
<dbReference type="GeneCards" id="BRD7"/>
<dbReference type="HGNC" id="HGNC:14310">
    <property type="gene designation" value="BRD7"/>
</dbReference>
<dbReference type="HPA" id="ENSG00000166164">
    <property type="expression patterns" value="Low tissue specificity"/>
</dbReference>
<dbReference type="MalaCards" id="BRD7"/>
<dbReference type="MIM" id="618489">
    <property type="type" value="gene"/>
</dbReference>
<dbReference type="neXtProt" id="NX_Q9NPI1"/>
<dbReference type="OpenTargets" id="ENSG00000166164"/>
<dbReference type="PharmGKB" id="PA25417"/>
<dbReference type="VEuPathDB" id="HostDB:ENSG00000166164"/>
<dbReference type="eggNOG" id="KOG1828">
    <property type="taxonomic scope" value="Eukaryota"/>
</dbReference>
<dbReference type="GeneTree" id="ENSGT00950000183170"/>
<dbReference type="HOGENOM" id="CLU_020704_0_1_1"/>
<dbReference type="InParanoid" id="Q9NPI1"/>
<dbReference type="OMA" id="HQGHRER"/>
<dbReference type="OrthoDB" id="21648at2759"/>
<dbReference type="PAN-GO" id="Q9NPI1">
    <property type="GO annotations" value="3 GO annotations based on evolutionary models"/>
</dbReference>
<dbReference type="PhylomeDB" id="Q9NPI1"/>
<dbReference type="TreeFam" id="TF106439"/>
<dbReference type="PathwayCommons" id="Q9NPI1"/>
<dbReference type="Reactome" id="R-HSA-6804758">
    <property type="pathway name" value="Regulation of TP53 Activity through Acetylation"/>
</dbReference>
<dbReference type="SignaLink" id="Q9NPI1"/>
<dbReference type="SIGNOR" id="Q9NPI1"/>
<dbReference type="BioGRID-ORCS" id="29117">
    <property type="hits" value="98 hits in 1165 CRISPR screens"/>
</dbReference>
<dbReference type="CD-CODE" id="DEE660B4">
    <property type="entry name" value="Stress granule"/>
</dbReference>
<dbReference type="ChiTaRS" id="BRD7">
    <property type="organism name" value="human"/>
</dbReference>
<dbReference type="EvolutionaryTrace" id="Q9NPI1"/>
<dbReference type="GeneWiki" id="BRD7"/>
<dbReference type="GenomeRNAi" id="29117"/>
<dbReference type="Pharos" id="Q9NPI1">
    <property type="development level" value="Tchem"/>
</dbReference>
<dbReference type="PRO" id="PR:Q9NPI1"/>
<dbReference type="Proteomes" id="UP000005640">
    <property type="component" value="Chromosome 16"/>
</dbReference>
<dbReference type="RNAct" id="Q9NPI1">
    <property type="molecule type" value="protein"/>
</dbReference>
<dbReference type="Bgee" id="ENSG00000166164">
    <property type="expression patterns" value="Expressed in sural nerve and 150 other cell types or tissues"/>
</dbReference>
<dbReference type="ExpressionAtlas" id="Q9NPI1">
    <property type="expression patterns" value="baseline and differential"/>
</dbReference>
<dbReference type="GO" id="GO:0000785">
    <property type="term" value="C:chromatin"/>
    <property type="evidence" value="ECO:0000303"/>
    <property type="project" value="ComplexPortal"/>
</dbReference>
<dbReference type="GO" id="GO:0005737">
    <property type="term" value="C:cytoplasm"/>
    <property type="evidence" value="ECO:0000304"/>
    <property type="project" value="ProtInc"/>
</dbReference>
<dbReference type="GO" id="GO:0005829">
    <property type="term" value="C:cytosol"/>
    <property type="evidence" value="ECO:0000314"/>
    <property type="project" value="HPA"/>
</dbReference>
<dbReference type="GO" id="GO:0000776">
    <property type="term" value="C:kinetochore"/>
    <property type="evidence" value="ECO:0000303"/>
    <property type="project" value="ComplexPortal"/>
</dbReference>
<dbReference type="GO" id="GO:0016363">
    <property type="term" value="C:nuclear matrix"/>
    <property type="evidence" value="ECO:0000303"/>
    <property type="project" value="ComplexPortal"/>
</dbReference>
<dbReference type="GO" id="GO:0005654">
    <property type="term" value="C:nucleoplasm"/>
    <property type="evidence" value="ECO:0000314"/>
    <property type="project" value="HPA"/>
</dbReference>
<dbReference type="GO" id="GO:0005634">
    <property type="term" value="C:nucleus"/>
    <property type="evidence" value="ECO:0000314"/>
    <property type="project" value="UniProtKB"/>
</dbReference>
<dbReference type="GO" id="GO:0016586">
    <property type="term" value="C:RSC-type complex"/>
    <property type="evidence" value="ECO:0000303"/>
    <property type="project" value="ComplexPortal"/>
</dbReference>
<dbReference type="GO" id="GO:0042393">
    <property type="term" value="F:histone binding"/>
    <property type="evidence" value="ECO:0000314"/>
    <property type="project" value="MGI"/>
</dbReference>
<dbReference type="GO" id="GO:0140015">
    <property type="term" value="F:histone H3K14ac reader activity"/>
    <property type="evidence" value="ECO:0000314"/>
    <property type="project" value="UniProtKB"/>
</dbReference>
<dbReference type="GO" id="GO:0070577">
    <property type="term" value="F:lysine-acetylated histone binding"/>
    <property type="evidence" value="ECO:0000318"/>
    <property type="project" value="GO_Central"/>
</dbReference>
<dbReference type="GO" id="GO:0002039">
    <property type="term" value="F:p53 binding"/>
    <property type="evidence" value="ECO:0000353"/>
    <property type="project" value="UniProtKB"/>
</dbReference>
<dbReference type="GO" id="GO:0000976">
    <property type="term" value="F:transcription cis-regulatory region binding"/>
    <property type="evidence" value="ECO:0000314"/>
    <property type="project" value="UniProtKB"/>
</dbReference>
<dbReference type="GO" id="GO:0003713">
    <property type="term" value="F:transcription coactivator activity"/>
    <property type="evidence" value="ECO:0000314"/>
    <property type="project" value="UniProtKB"/>
</dbReference>
<dbReference type="GO" id="GO:0003714">
    <property type="term" value="F:transcription corepressor activity"/>
    <property type="evidence" value="ECO:0000314"/>
    <property type="project" value="UniProtKB"/>
</dbReference>
<dbReference type="GO" id="GO:0006338">
    <property type="term" value="P:chromatin remodeling"/>
    <property type="evidence" value="ECO:0000303"/>
    <property type="project" value="ComplexPortal"/>
</dbReference>
<dbReference type="GO" id="GO:0045892">
    <property type="term" value="P:negative regulation of DNA-templated transcription"/>
    <property type="evidence" value="ECO:0000314"/>
    <property type="project" value="UniProtKB"/>
</dbReference>
<dbReference type="GO" id="GO:2000134">
    <property type="term" value="P:negative regulation of G1/S transition of mitotic cell cycle"/>
    <property type="evidence" value="ECO:0000314"/>
    <property type="project" value="UniProtKB"/>
</dbReference>
<dbReference type="GO" id="GO:0045597">
    <property type="term" value="P:positive regulation of cell differentiation"/>
    <property type="evidence" value="ECO:0000303"/>
    <property type="project" value="ComplexPortal"/>
</dbReference>
<dbReference type="GO" id="GO:2000781">
    <property type="term" value="P:positive regulation of double-strand break repair"/>
    <property type="evidence" value="ECO:0000303"/>
    <property type="project" value="ComplexPortal"/>
</dbReference>
<dbReference type="GO" id="GO:0045663">
    <property type="term" value="P:positive regulation of myoblast differentiation"/>
    <property type="evidence" value="ECO:0000303"/>
    <property type="project" value="ComplexPortal"/>
</dbReference>
<dbReference type="GO" id="GO:0045582">
    <property type="term" value="P:positive regulation of T cell differentiation"/>
    <property type="evidence" value="ECO:0000303"/>
    <property type="project" value="ComplexPortal"/>
</dbReference>
<dbReference type="GO" id="GO:0070316">
    <property type="term" value="P:regulation of G0 to G1 transition"/>
    <property type="evidence" value="ECO:0000303"/>
    <property type="project" value="ComplexPortal"/>
</dbReference>
<dbReference type="GO" id="GO:2000045">
    <property type="term" value="P:regulation of G1/S transition of mitotic cell cycle"/>
    <property type="evidence" value="ECO:0000303"/>
    <property type="project" value="ComplexPortal"/>
</dbReference>
<dbReference type="GO" id="GO:0007346">
    <property type="term" value="P:regulation of mitotic cell cycle"/>
    <property type="evidence" value="ECO:0000315"/>
    <property type="project" value="UniProtKB"/>
</dbReference>
<dbReference type="GO" id="GO:0030071">
    <property type="term" value="P:regulation of mitotic metaphase/anaphase transition"/>
    <property type="evidence" value="ECO:0000303"/>
    <property type="project" value="ComplexPortal"/>
</dbReference>
<dbReference type="GO" id="GO:2000819">
    <property type="term" value="P:regulation of nucleotide-excision repair"/>
    <property type="evidence" value="ECO:0000303"/>
    <property type="project" value="ComplexPortal"/>
</dbReference>
<dbReference type="GO" id="GO:0006357">
    <property type="term" value="P:regulation of transcription by RNA polymerase II"/>
    <property type="evidence" value="ECO:0000314"/>
    <property type="project" value="MGI"/>
</dbReference>
<dbReference type="GO" id="GO:0045815">
    <property type="term" value="P:transcription initiation-coupled chromatin remodeling"/>
    <property type="evidence" value="ECO:0000315"/>
    <property type="project" value="UniProtKB"/>
</dbReference>
<dbReference type="GO" id="GO:0016055">
    <property type="term" value="P:Wnt signaling pathway"/>
    <property type="evidence" value="ECO:0007669"/>
    <property type="project" value="UniProtKB-KW"/>
</dbReference>
<dbReference type="CDD" id="cd05513">
    <property type="entry name" value="Bromo_brd7_like"/>
    <property type="match status" value="1"/>
</dbReference>
<dbReference type="FunFam" id="1.20.920.10:FF:000022">
    <property type="entry name" value="Putative bromodomain-containing protein 9"/>
    <property type="match status" value="1"/>
</dbReference>
<dbReference type="Gene3D" id="1.20.920.10">
    <property type="entry name" value="Bromodomain-like"/>
    <property type="match status" value="1"/>
</dbReference>
<dbReference type="InterPro" id="IPR001487">
    <property type="entry name" value="Bromodomain"/>
</dbReference>
<dbReference type="InterPro" id="IPR036427">
    <property type="entry name" value="Bromodomain-like_sf"/>
</dbReference>
<dbReference type="InterPro" id="IPR051831">
    <property type="entry name" value="Bromodomain_contain_prot"/>
</dbReference>
<dbReference type="InterPro" id="IPR021900">
    <property type="entry name" value="DUF3512"/>
</dbReference>
<dbReference type="PANTHER" id="PTHR22881">
    <property type="entry name" value="BROMODOMAIN CONTAINING PROTEIN"/>
    <property type="match status" value="1"/>
</dbReference>
<dbReference type="PANTHER" id="PTHR22881:SF12">
    <property type="entry name" value="BROMODOMAIN-CONTAINING PROTEIN 7"/>
    <property type="match status" value="1"/>
</dbReference>
<dbReference type="Pfam" id="PF00439">
    <property type="entry name" value="Bromodomain"/>
    <property type="match status" value="1"/>
</dbReference>
<dbReference type="Pfam" id="PF12024">
    <property type="entry name" value="DUF3512"/>
    <property type="match status" value="1"/>
</dbReference>
<dbReference type="PRINTS" id="PR00503">
    <property type="entry name" value="BROMODOMAIN"/>
</dbReference>
<dbReference type="SMART" id="SM00297">
    <property type="entry name" value="BROMO"/>
    <property type="match status" value="1"/>
</dbReference>
<dbReference type="SUPFAM" id="SSF47370">
    <property type="entry name" value="Bromodomain"/>
    <property type="match status" value="1"/>
</dbReference>
<dbReference type="PROSITE" id="PS50014">
    <property type="entry name" value="BROMODOMAIN_2"/>
    <property type="match status" value="1"/>
</dbReference>
<feature type="chain" id="PRO_0000227664" description="Bromodomain-containing protein 7">
    <location>
        <begin position="1"/>
        <end position="651"/>
    </location>
</feature>
<feature type="domain" description="Bromo" evidence="4">
    <location>
        <begin position="131"/>
        <end position="235"/>
    </location>
</feature>
<feature type="region of interest" description="Disordered" evidence="5">
    <location>
        <begin position="35"/>
        <end position="132"/>
    </location>
</feature>
<feature type="region of interest" description="Disordered" evidence="5">
    <location>
        <begin position="253"/>
        <end position="301"/>
    </location>
</feature>
<feature type="coiled-coil region" evidence="3">
    <location>
        <begin position="536"/>
        <end position="567"/>
    </location>
</feature>
<feature type="short sequence motif" description="Nuclear localization signal" evidence="9">
    <location>
        <begin position="65"/>
        <end position="96"/>
    </location>
</feature>
<feature type="compositionally biased region" description="Polar residues" evidence="5">
    <location>
        <begin position="35"/>
        <end position="45"/>
    </location>
</feature>
<feature type="compositionally biased region" description="Basic and acidic residues" evidence="5">
    <location>
        <begin position="47"/>
        <end position="57"/>
    </location>
</feature>
<feature type="compositionally biased region" description="Basic residues" evidence="5">
    <location>
        <begin position="58"/>
        <end position="69"/>
    </location>
</feature>
<feature type="compositionally biased region" description="Basic and acidic residues" evidence="5">
    <location>
        <begin position="70"/>
        <end position="106"/>
    </location>
</feature>
<feature type="compositionally biased region" description="Basic and acidic residues" evidence="5">
    <location>
        <begin position="273"/>
        <end position="301"/>
    </location>
</feature>
<feature type="modified residue" description="Phosphoserine" evidence="18 19 20 21">
    <location>
        <position position="279"/>
    </location>
</feature>
<feature type="modified residue" description="Phosphoserine" evidence="21">
    <location>
        <position position="289"/>
    </location>
</feature>
<feature type="modified residue" description="N6-acetyllysine" evidence="2">
    <location>
        <position position="328"/>
    </location>
</feature>
<feature type="modified residue" description="Phosphoserine" evidence="21">
    <location>
        <position position="380"/>
    </location>
</feature>
<feature type="modified residue" description="Phosphoserine" evidence="2">
    <location>
        <position position="482"/>
    </location>
</feature>
<feature type="modified residue" description="Phosphothreonine" evidence="21">
    <location>
        <position position="514"/>
    </location>
</feature>
<feature type="modified residue" description="Phosphoserine" evidence="22">
    <location>
        <position position="621"/>
    </location>
</feature>
<feature type="cross-link" description="Glycyl lysine isopeptide (Lys-Gly) (interchain with G-Cter in SUMO2)" evidence="23 24">
    <location>
        <position position="21"/>
    </location>
</feature>
<feature type="cross-link" description="Glycyl lysine isopeptide (Lys-Gly) (interchain with G-Cter in SUMO2)" evidence="24">
    <location>
        <position position="52"/>
    </location>
</feature>
<feature type="cross-link" description="Glycyl lysine isopeptide (Lys-Gly) (interchain with G-Cter in SUMO2)" evidence="23 24">
    <location>
        <position position="127"/>
    </location>
</feature>
<feature type="cross-link" description="Glycyl lysine isopeptide (Lys-Gly) (interchain with G-Cter in SUMO2)" evidence="24">
    <location>
        <position position="186"/>
    </location>
</feature>
<feature type="cross-link" description="Glycyl lysine isopeptide (Lys-Gly) (interchain with G-Cter in SUMO2)" evidence="24">
    <location>
        <position position="197"/>
    </location>
</feature>
<feature type="cross-link" description="Glycyl lysine isopeptide (Lys-Gly) (interchain with G-Cter in SUMO2)" evidence="24">
    <location>
        <position position="201"/>
    </location>
</feature>
<feature type="cross-link" description="Glycyl lysine isopeptide (Lys-Gly) (interchain with G-Cter in SUMO2)" evidence="24">
    <location>
        <position position="212"/>
    </location>
</feature>
<feature type="cross-link" description="Glycyl lysine isopeptide (Lys-Gly) (interchain with G-Cter in SUMO2)" evidence="24">
    <location>
        <position position="241"/>
    </location>
</feature>
<feature type="cross-link" description="Glycyl lysine isopeptide (Lys-Gly) (interchain with G-Cter in SUMO2)" evidence="23 24">
    <location>
        <position position="305"/>
    </location>
</feature>
<feature type="cross-link" description="Glycyl lysine isopeptide (Lys-Gly) (interchain with G-Cter in SUMO2)" evidence="24">
    <location>
        <position position="307"/>
    </location>
</feature>
<feature type="cross-link" description="Glycyl lysine isopeptide (Lys-Gly) (interchain with G-Cter in SUMO2)" evidence="24">
    <location>
        <position position="344"/>
    </location>
</feature>
<feature type="cross-link" description="Glycyl lysine isopeptide (Lys-Gly) (interchain with G-Cter in SUMO2)" evidence="24">
    <location>
        <position position="389"/>
    </location>
</feature>
<feature type="splice variant" id="VSP_017564" description="In isoform 2." evidence="15 16">
    <original>E</original>
    <variation>EQ</variation>
    <location>
        <position position="500"/>
    </location>
</feature>
<feature type="sequence conflict" description="In Ref. 1; AAF19526." evidence="17" ref="1">
    <original>R</original>
    <variation>G</variation>
    <location>
        <position position="66"/>
    </location>
</feature>
<feature type="sequence conflict" description="In Ref. 1; AAF19526." evidence="17" ref="1">
    <original>R</original>
    <variation>T</variation>
    <location>
        <position position="83"/>
    </location>
</feature>
<feature type="sequence conflict" description="In Ref. 1; AAF19526." evidence="17" ref="1">
    <original>R</original>
    <variation>Q</variation>
    <location>
        <position position="96"/>
    </location>
</feature>
<feature type="sequence conflict" description="In Ref. 5; AAH94706." evidence="17" ref="5">
    <original>M</original>
    <variation>I</variation>
    <location>
        <position position="170"/>
    </location>
</feature>
<feature type="sequence conflict" description="In Ref. 6; BAB55031." evidence="17" ref="6">
    <original>E</original>
    <variation>G</variation>
    <location>
        <position position="485"/>
    </location>
</feature>
<feature type="helix" evidence="26">
    <location>
        <begin position="135"/>
        <end position="149"/>
    </location>
</feature>
<feature type="helix" evidence="25">
    <location>
        <begin position="152"/>
        <end position="154"/>
    </location>
</feature>
<feature type="strand" evidence="26">
    <location>
        <begin position="155"/>
        <end position="158"/>
    </location>
</feature>
<feature type="turn" evidence="26">
    <location>
        <begin position="162"/>
        <end position="164"/>
    </location>
</feature>
<feature type="strand" evidence="25">
    <location>
        <begin position="165"/>
        <end position="167"/>
    </location>
</feature>
<feature type="helix" evidence="26">
    <location>
        <begin position="168"/>
        <end position="171"/>
    </location>
</feature>
<feature type="helix" evidence="26">
    <location>
        <begin position="178"/>
        <end position="186"/>
    </location>
</feature>
<feature type="helix" evidence="26">
    <location>
        <begin position="193"/>
        <end position="210"/>
    </location>
</feature>
<feature type="helix" evidence="26">
    <location>
        <begin position="216"/>
        <end position="232"/>
    </location>
</feature>
<feature type="helix" evidence="27">
    <location>
        <begin position="234"/>
        <end position="246"/>
    </location>
</feature>
<feature type="helix" evidence="28">
    <location>
        <begin position="370"/>
        <end position="372"/>
    </location>
</feature>
<feature type="strand" evidence="28">
    <location>
        <begin position="392"/>
        <end position="394"/>
    </location>
</feature>
<feature type="helix" evidence="28">
    <location>
        <begin position="423"/>
        <end position="431"/>
    </location>
</feature>
<feature type="helix" evidence="28">
    <location>
        <begin position="537"/>
        <end position="565"/>
    </location>
</feature>
<feature type="helix" evidence="28">
    <location>
        <begin position="580"/>
        <end position="596"/>
    </location>
</feature>
<organism>
    <name type="scientific">Homo sapiens</name>
    <name type="common">Human</name>
    <dbReference type="NCBI Taxonomy" id="9606"/>
    <lineage>
        <taxon>Eukaryota</taxon>
        <taxon>Metazoa</taxon>
        <taxon>Chordata</taxon>
        <taxon>Craniata</taxon>
        <taxon>Vertebrata</taxon>
        <taxon>Euteleostomi</taxon>
        <taxon>Mammalia</taxon>
        <taxon>Eutheria</taxon>
        <taxon>Euarchontoglires</taxon>
        <taxon>Primates</taxon>
        <taxon>Haplorrhini</taxon>
        <taxon>Catarrhini</taxon>
        <taxon>Hominidae</taxon>
        <taxon>Homo</taxon>
    </lineage>
</organism>
<comment type="function">
    <text evidence="1 8 9 11 12 13">Acts both as coactivator and as corepressor. May play a role in chromatin remodeling. Activator of the Wnt signaling pathway in a DVL1-dependent manner by negatively regulating the GSK3B phosphotransferase activity. Induces dephosphorylation of GSK3B at 'Tyr-216'. Down-regulates TRIM24-mediated activation of transcriptional activation by AR (By similarity). Transcriptional corepressor that down-regulates the expression of target genes. Binds to target promoters, leading to increased histone H3 acetylation at 'Lys-9' (H3K9ac). Binds to the ESR1 promoter. Recruits BRCA1 and POU2F1 to the ESR1 promoter. Coactivator for TP53-mediated activation of transcription of a set of target genes. Required for TP53-mediated cell-cycle arrest in response to oncogene activation. Promotes acetylation of TP53 at 'Lys-382', and thereby promotes efficient recruitment of TP53 to target promoters. Inhibits cell cycle progression from G1 to S phase.</text>
</comment>
<comment type="subunit">
    <text evidence="1 6 7 8 10 11 12 13">Interacts with TRIM24, PTPN13 and DVL1. Identified in a complex with SMARCA4/BRG1, SMARCC1/BAF155, SMARCE1/BAF57, DPF2/BAF45D and ARID2, subunits of the SWI/SNF-B (PBAF) chromatin remodeling complex (By similarity). Interacts with IRF2 and HNRPUL1. Interacts (via N-terminus) with TP53. Interacts (via C-terminus) with EP300. Interacts with BRCA1. Interacts (via bromo domain) with histone H3 (via N-terminus) acetylated at 'Lys-14' (H3K14ac). Has low affinity for histone H3 acetylated at 'Lys-9' (H3K9ac). Has the highest affinity for histone H3 that is acetylated both at 'Lys-9' (H3K9ac) and at 'Lys-14' (H3K14ac). Has very low affinity for non-acetylated histone H3. Interacts (via bromo domain) with histone H4 (via N-terminus) acetylated at 'Lys-8' (H3K8ac) (in vitro).</text>
</comment>
<comment type="interaction">
    <interactant intactId="EBI-711221">
        <id>Q9NPI1</id>
    </interactant>
    <interactant intactId="EBI-447295">
        <id>Q09472</id>
        <label>EP300</label>
    </interactant>
    <organismsDiffer>false</organismsDiffer>
    <experiments>3</experiments>
</comment>
<comment type="interaction">
    <interactant intactId="EBI-711221">
        <id>Q9NPI1</id>
    </interactant>
    <interactant intactId="EBI-1018153">
        <id>Q9BUJ2</id>
        <label>HNRNPUL1</label>
    </interactant>
    <organismsDiffer>false</organismsDiffer>
    <experiments>5</experiments>
</comment>
<comment type="interaction">
    <interactant intactId="EBI-711221">
        <id>Q9NPI1</id>
    </interactant>
    <interactant intactId="EBI-742388">
        <id>Q9H8W4</id>
        <label>PLEKHF2</label>
    </interactant>
    <organismsDiffer>false</organismsDiffer>
    <experiments>3</experiments>
</comment>
<comment type="interaction">
    <interactant intactId="EBI-711221">
        <id>Q9NPI1</id>
    </interactant>
    <interactant intactId="EBI-366083">
        <id>P04637</id>
        <label>TP53</label>
    </interactant>
    <organismsDiffer>false</organismsDiffer>
    <experiments>9</experiments>
</comment>
<comment type="subcellular location">
    <subcellularLocation>
        <location evidence="8 9 12 14">Nucleus</location>
    </subcellularLocation>
    <subcellularLocation>
        <location evidence="8">Chromosome</location>
    </subcellularLocation>
</comment>
<comment type="subcellular location">
    <molecule>Isoform 2</molecule>
    <subcellularLocation>
        <location evidence="6">Nucleus</location>
    </subcellularLocation>
</comment>
<comment type="alternative products">
    <event type="alternative splicing"/>
    <isoform>
        <id>Q9NPI1-1</id>
        <name>1</name>
        <sequence type="displayed"/>
    </isoform>
    <isoform>
        <id>Q9NPI1-2</id>
        <name>2</name>
        <sequence type="described" ref="VSP_017564"/>
    </isoform>
</comment>
<comment type="sequence caution" evidence="17">
    <conflict type="erroneous initiation">
        <sequence resource="EMBL-CDS" id="AAH01611"/>
    </conflict>
    <text>Extended N-terminus.</text>
</comment>
<comment type="sequence caution" evidence="17">
    <conflict type="erroneous initiation">
        <sequence resource="EMBL-CDS" id="BAB55031"/>
    </conflict>
    <text>Truncated N-terminus.</text>
</comment>
<comment type="sequence caution" evidence="17">
    <conflict type="erroneous initiation">
        <sequence resource="EMBL-CDS" id="BAC11089"/>
    </conflict>
    <text>Truncated N-terminus.</text>
</comment>
<proteinExistence type="evidence at protein level"/>